<feature type="transit peptide" description="Chloroplast" evidence="4">
    <location>
        <begin position="1"/>
        <end position="45"/>
    </location>
</feature>
<feature type="chain" id="PRO_0000398182" description="Isoprene synthase, chloroplastic">
    <location>
        <begin position="46"/>
        <end position="608"/>
    </location>
</feature>
<feature type="short sequence motif" description="DDXXD motif" evidence="2">
    <location>
        <begin position="350"/>
        <end position="354"/>
    </location>
</feature>
<feature type="binding site" evidence="3">
    <location>
        <position position="350"/>
    </location>
    <ligand>
        <name>dimethylallyl diphosphate</name>
        <dbReference type="ChEBI" id="CHEBI:57623"/>
    </ligand>
</feature>
<feature type="binding site" evidence="2">
    <location>
        <position position="350"/>
    </location>
    <ligand>
        <name>Mg(2+)</name>
        <dbReference type="ChEBI" id="CHEBI:18420"/>
        <label>1</label>
    </ligand>
</feature>
<feature type="binding site" evidence="2">
    <location>
        <position position="350"/>
    </location>
    <ligand>
        <name>Mg(2+)</name>
        <dbReference type="ChEBI" id="CHEBI:18420"/>
        <label>2</label>
    </ligand>
</feature>
<feature type="binding site" evidence="2">
    <location>
        <position position="354"/>
    </location>
    <ligand>
        <name>Mg(2+)</name>
        <dbReference type="ChEBI" id="CHEBI:18420"/>
        <label>1</label>
    </ligand>
</feature>
<feature type="binding site" evidence="2">
    <location>
        <position position="354"/>
    </location>
    <ligand>
        <name>Mg(2+)</name>
        <dbReference type="ChEBI" id="CHEBI:18420"/>
        <label>2</label>
    </ligand>
</feature>
<feature type="binding site" evidence="3">
    <location>
        <position position="428"/>
    </location>
    <ligand>
        <name>dimethylallyl diphosphate</name>
        <dbReference type="ChEBI" id="CHEBI:57623"/>
    </ligand>
</feature>
<feature type="binding site" evidence="3">
    <location>
        <position position="494"/>
    </location>
    <ligand>
        <name>dimethylallyl diphosphate</name>
        <dbReference type="ChEBI" id="CHEBI:57623"/>
    </ligand>
</feature>
<feature type="binding site" evidence="3">
    <location>
        <position position="497"/>
    </location>
    <ligand>
        <name>dimethylallyl diphosphate</name>
        <dbReference type="ChEBI" id="CHEBI:57623"/>
    </ligand>
</feature>
<feature type="binding site" evidence="2">
    <location>
        <position position="497"/>
    </location>
    <ligand>
        <name>Mg(2+)</name>
        <dbReference type="ChEBI" id="CHEBI:18420"/>
        <label>3</label>
    </ligand>
</feature>
<feature type="binding site" evidence="2">
    <location>
        <position position="501"/>
    </location>
    <ligand>
        <name>Mg(2+)</name>
        <dbReference type="ChEBI" id="CHEBI:18420"/>
        <label>3</label>
    </ligand>
</feature>
<feature type="binding site" evidence="2">
    <location>
        <position position="505"/>
    </location>
    <ligand>
        <name>Mg(2+)</name>
        <dbReference type="ChEBI" id="CHEBI:18420"/>
        <label>3</label>
    </ligand>
</feature>
<gene>
    <name type="primary">ISPS</name>
</gene>
<name>ISPS_PUEML</name>
<protein>
    <recommendedName>
        <fullName>Isoprene synthase, chloroplastic</fullName>
        <ecNumber evidence="5">4.2.3.27</ecNumber>
    </recommendedName>
</protein>
<evidence type="ECO:0000250" key="1">
    <source>
        <dbReference type="UniProtKB" id="A0A1C9J6A7"/>
    </source>
</evidence>
<evidence type="ECO:0000250" key="2">
    <source>
        <dbReference type="UniProtKB" id="Q40577"/>
    </source>
</evidence>
<evidence type="ECO:0000250" key="3">
    <source>
        <dbReference type="UniProtKB" id="Q9AR86"/>
    </source>
</evidence>
<evidence type="ECO:0000255" key="4"/>
<evidence type="ECO:0000269" key="5">
    <source>
    </source>
</evidence>
<evidence type="ECO:0000305" key="6"/>
<organism>
    <name type="scientific">Pueraria montana var. lobata</name>
    <name type="common">Kudzu vine</name>
    <name type="synonym">Pueraria lobata</name>
    <dbReference type="NCBI Taxonomy" id="3893"/>
    <lineage>
        <taxon>Eukaryota</taxon>
        <taxon>Viridiplantae</taxon>
        <taxon>Streptophyta</taxon>
        <taxon>Embryophyta</taxon>
        <taxon>Tracheophyta</taxon>
        <taxon>Spermatophyta</taxon>
        <taxon>Magnoliopsida</taxon>
        <taxon>eudicotyledons</taxon>
        <taxon>Gunneridae</taxon>
        <taxon>Pentapetalae</taxon>
        <taxon>rosids</taxon>
        <taxon>fabids</taxon>
        <taxon>Fabales</taxon>
        <taxon>Fabaceae</taxon>
        <taxon>Papilionoideae</taxon>
        <taxon>50 kb inversion clade</taxon>
        <taxon>NPAAA clade</taxon>
        <taxon>indigoferoid/millettioid clade</taxon>
        <taxon>Phaseoleae</taxon>
        <taxon>Pueraria</taxon>
    </lineage>
</organism>
<comment type="function">
    <text evidence="5">Lyase that catalyzes the formation of isoprene from dimethylallyl diphosphate.</text>
</comment>
<comment type="catalytic activity">
    <reaction evidence="5">
        <text>dimethylallyl diphosphate = isoprene + diphosphate</text>
        <dbReference type="Rhea" id="RHEA:13369"/>
        <dbReference type="ChEBI" id="CHEBI:33019"/>
        <dbReference type="ChEBI" id="CHEBI:35194"/>
        <dbReference type="ChEBI" id="CHEBI:57623"/>
        <dbReference type="EC" id="4.2.3.27"/>
    </reaction>
</comment>
<comment type="cofactor">
    <cofactor evidence="1">
        <name>Mg(2+)</name>
        <dbReference type="ChEBI" id="CHEBI:18420"/>
    </cofactor>
    <cofactor evidence="1">
        <name>Mn(2+)</name>
        <dbReference type="ChEBI" id="CHEBI:29035"/>
    </cofactor>
    <text evidence="1">Binds 3 Mg(2+) or Mn(2+) ions per subunit.</text>
</comment>
<comment type="biophysicochemical properties">
    <kinetics>
        <KM evidence="5">7.7 mM for dimethylallyl diphosphate</KM>
    </kinetics>
</comment>
<comment type="subcellular location">
    <subcellularLocation>
        <location evidence="5">Plastid</location>
        <location evidence="5">Chloroplast</location>
    </subcellularLocation>
    <text evidence="5">recovered from purified chloroplasts of transgenic Arabidopsis plants.</text>
</comment>
<comment type="domain">
    <text evidence="2">The Asp-Asp-Xaa-Xaa-Asp/Glu (DDXXD/E) motif is important for the catalytic activity, presumably through binding to Mg(2+).</text>
</comment>
<comment type="miscellaneous">
    <text evidence="5">Sufficient to confer the trait of isoprene emission when expressed in Arabidopsis.</text>
</comment>
<comment type="similarity">
    <text evidence="6">Belongs to the terpene synthase family. Tpsb subfamily.</text>
</comment>
<proteinExistence type="evidence at protein level"/>
<accession>Q6EJ97</accession>
<sequence length="608" mass="70075">MATNLLCLSNKLSSPTPTPSTRFPQSKNFITQKTSLANPKPWRVICATSSQFTQITEHNSRRSANYQPNLWNFEFLQSLENDLKVEKLEEKATKLEEEVRCMINRVDTQPLSLLELIDDVQRLGLTYKFEKDIIKALENIVLLDENKKNKSDLHATALSFRLLRQHGFEVSQDVFERFKDKEGGFSGELKGDVQGLLSLYEASYLGFEGENLLEEARTFSITHLKNNLKEGINTKVAEQVSHALELPYHQRLHRLEARWFLDKYEPKEPHHQLLLELAKLDFNMVQTLHQKELQDLSRWWTEMGLASKLDFVRDRLMEVYFWALGMAPDPQFGECRKAVTKMFGLVTIIDDVYDVYGTLDELQLFTDAVERWDVNAINTLPDYMKLCFLALYNTVNDTSYSILKEKGHNNLSYLTKSWRELCKAFLQEAKWSNNKIIPAFSKYLENASVSSSGVALLAPSYFSVCQQQEDISDHALRSLTDFHGLVRSSCVIFRLCNDLATSAAELERGETTNSIISYMHENDGTSEEQAREELRKLIDAEWKKMNRERVSDSTLLPKAFMEIAVNMARVSHCTYQYGDGLGRPDYATENRIKLLLIDPFPINQLMYV</sequence>
<dbReference type="EC" id="4.2.3.27" evidence="5"/>
<dbReference type="EMBL" id="AY316691">
    <property type="protein sequence ID" value="AAQ84170.1"/>
    <property type="molecule type" value="Genomic_DNA"/>
</dbReference>
<dbReference type="SMR" id="Q6EJ97"/>
<dbReference type="BRENDA" id="4.2.3.27">
    <property type="organism ID" value="13960"/>
</dbReference>
<dbReference type="SABIO-RK" id="Q6EJ97"/>
<dbReference type="GO" id="GO:0009507">
    <property type="term" value="C:chloroplast"/>
    <property type="evidence" value="ECO:0007669"/>
    <property type="project" value="UniProtKB-SubCell"/>
</dbReference>
<dbReference type="GO" id="GO:0034009">
    <property type="term" value="F:isoprene synthase activity"/>
    <property type="evidence" value="ECO:0007669"/>
    <property type="project" value="UniProtKB-EC"/>
</dbReference>
<dbReference type="GO" id="GO:0000287">
    <property type="term" value="F:magnesium ion binding"/>
    <property type="evidence" value="ECO:0007669"/>
    <property type="project" value="InterPro"/>
</dbReference>
<dbReference type="GO" id="GO:0016102">
    <property type="term" value="P:diterpenoid biosynthetic process"/>
    <property type="evidence" value="ECO:0007669"/>
    <property type="project" value="InterPro"/>
</dbReference>
<dbReference type="CDD" id="cd00684">
    <property type="entry name" value="Terpene_cyclase_plant_C1"/>
    <property type="match status" value="1"/>
</dbReference>
<dbReference type="FunFam" id="1.10.600.10:FF:000007">
    <property type="entry name" value="Isoprene synthase, chloroplastic"/>
    <property type="match status" value="1"/>
</dbReference>
<dbReference type="FunFam" id="1.50.10.130:FF:000001">
    <property type="entry name" value="Isoprene synthase, chloroplastic"/>
    <property type="match status" value="1"/>
</dbReference>
<dbReference type="Gene3D" id="1.10.600.10">
    <property type="entry name" value="Farnesyl Diphosphate Synthase"/>
    <property type="match status" value="1"/>
</dbReference>
<dbReference type="Gene3D" id="1.50.10.130">
    <property type="entry name" value="Terpene synthase, N-terminal domain"/>
    <property type="match status" value="1"/>
</dbReference>
<dbReference type="InterPro" id="IPR008949">
    <property type="entry name" value="Isoprenoid_synthase_dom_sf"/>
</dbReference>
<dbReference type="InterPro" id="IPR034741">
    <property type="entry name" value="Terpene_cyclase-like_1_C"/>
</dbReference>
<dbReference type="InterPro" id="IPR044814">
    <property type="entry name" value="Terpene_cyclase_plant_C1"/>
</dbReference>
<dbReference type="InterPro" id="IPR001906">
    <property type="entry name" value="Terpene_synth_N"/>
</dbReference>
<dbReference type="InterPro" id="IPR036965">
    <property type="entry name" value="Terpene_synth_N_sf"/>
</dbReference>
<dbReference type="InterPro" id="IPR050148">
    <property type="entry name" value="Terpene_synthase-like"/>
</dbReference>
<dbReference type="InterPro" id="IPR005630">
    <property type="entry name" value="Terpene_synthase_metal-bd"/>
</dbReference>
<dbReference type="InterPro" id="IPR008930">
    <property type="entry name" value="Terpenoid_cyclase/PrenylTrfase"/>
</dbReference>
<dbReference type="PANTHER" id="PTHR31225">
    <property type="entry name" value="OS04G0344100 PROTEIN-RELATED"/>
    <property type="match status" value="1"/>
</dbReference>
<dbReference type="PANTHER" id="PTHR31225:SF98">
    <property type="entry name" value="TERPENE SYNTHASE 9-RELATED"/>
    <property type="match status" value="1"/>
</dbReference>
<dbReference type="Pfam" id="PF01397">
    <property type="entry name" value="Terpene_synth"/>
    <property type="match status" value="1"/>
</dbReference>
<dbReference type="Pfam" id="PF03936">
    <property type="entry name" value="Terpene_synth_C"/>
    <property type="match status" value="1"/>
</dbReference>
<dbReference type="SFLD" id="SFLDS00005">
    <property type="entry name" value="Isoprenoid_Synthase_Type_I"/>
    <property type="match status" value="1"/>
</dbReference>
<dbReference type="SFLD" id="SFLDG01019">
    <property type="entry name" value="Terpene_Cyclase_Like_1_C_Termi"/>
    <property type="match status" value="1"/>
</dbReference>
<dbReference type="SUPFAM" id="SSF48239">
    <property type="entry name" value="Terpenoid cyclases/Protein prenyltransferases"/>
    <property type="match status" value="1"/>
</dbReference>
<dbReference type="SUPFAM" id="SSF48576">
    <property type="entry name" value="Terpenoid synthases"/>
    <property type="match status" value="1"/>
</dbReference>
<reference key="1">
    <citation type="journal article" date="2005" name="Plant Physiol.">
        <title>Evolution of the isoprene biosynthetic pathway in kudzu.</title>
        <authorList>
            <person name="Sharkey T.D."/>
            <person name="Yeh S."/>
            <person name="Wiberley A.E."/>
            <person name="Falbel T.G."/>
            <person name="Gong D."/>
            <person name="Fernandez D.E."/>
        </authorList>
    </citation>
    <scope>NUCLEOTIDE SEQUENCE [GENOMIC DNA]</scope>
    <scope>BIOPHYSICOCHEMICAL PROPERTIES</scope>
    <scope>CATALYTIC ACTIVITY</scope>
    <scope>FUNCTION</scope>
    <scope>SUBCELLULAR LOCATION</scope>
</reference>
<keyword id="KW-0150">Chloroplast</keyword>
<keyword id="KW-0456">Lyase</keyword>
<keyword id="KW-0460">Magnesium</keyword>
<keyword id="KW-0479">Metal-binding</keyword>
<keyword id="KW-0934">Plastid</keyword>
<keyword id="KW-0809">Transit peptide</keyword>